<proteinExistence type="inferred from homology"/>
<feature type="chain" id="PRO_0000224096" description="DNA-directed RNA polymerase subunit beta">
    <location>
        <begin position="1"/>
        <end position="1357"/>
    </location>
</feature>
<comment type="function">
    <text evidence="1">DNA-dependent RNA polymerase catalyzes the transcription of DNA into RNA using the four ribonucleoside triphosphates as substrates.</text>
</comment>
<comment type="catalytic activity">
    <reaction evidence="1">
        <text>RNA(n) + a ribonucleoside 5'-triphosphate = RNA(n+1) + diphosphate</text>
        <dbReference type="Rhea" id="RHEA:21248"/>
        <dbReference type="Rhea" id="RHEA-COMP:14527"/>
        <dbReference type="Rhea" id="RHEA-COMP:17342"/>
        <dbReference type="ChEBI" id="CHEBI:33019"/>
        <dbReference type="ChEBI" id="CHEBI:61557"/>
        <dbReference type="ChEBI" id="CHEBI:140395"/>
        <dbReference type="EC" id="2.7.7.6"/>
    </reaction>
</comment>
<comment type="subunit">
    <text evidence="1">The RNAP catalytic core consists of 2 alpha, 1 beta, 1 beta' and 1 omega subunit. When a sigma factor is associated with the core the holoenzyme is formed, which can initiate transcription.</text>
</comment>
<comment type="similarity">
    <text evidence="1">Belongs to the RNA polymerase beta chain family.</text>
</comment>
<gene>
    <name evidence="1" type="primary">rpoB</name>
    <name type="ordered locus">PSPPH_4599</name>
</gene>
<dbReference type="EC" id="2.7.7.6" evidence="1"/>
<dbReference type="EMBL" id="CP000058">
    <property type="protein sequence ID" value="AAZ37001.1"/>
    <property type="molecule type" value="Genomic_DNA"/>
</dbReference>
<dbReference type="RefSeq" id="WP_011169631.1">
    <property type="nucleotide sequence ID" value="NC_005773.3"/>
</dbReference>
<dbReference type="SMR" id="Q48D29"/>
<dbReference type="KEGG" id="psp:PSPPH_4599"/>
<dbReference type="eggNOG" id="COG0085">
    <property type="taxonomic scope" value="Bacteria"/>
</dbReference>
<dbReference type="HOGENOM" id="CLU_000524_4_1_6"/>
<dbReference type="Proteomes" id="UP000000551">
    <property type="component" value="Chromosome"/>
</dbReference>
<dbReference type="GO" id="GO:0000428">
    <property type="term" value="C:DNA-directed RNA polymerase complex"/>
    <property type="evidence" value="ECO:0007669"/>
    <property type="project" value="UniProtKB-KW"/>
</dbReference>
<dbReference type="GO" id="GO:0003677">
    <property type="term" value="F:DNA binding"/>
    <property type="evidence" value="ECO:0007669"/>
    <property type="project" value="UniProtKB-UniRule"/>
</dbReference>
<dbReference type="GO" id="GO:0003899">
    <property type="term" value="F:DNA-directed RNA polymerase activity"/>
    <property type="evidence" value="ECO:0007669"/>
    <property type="project" value="UniProtKB-UniRule"/>
</dbReference>
<dbReference type="GO" id="GO:0032549">
    <property type="term" value="F:ribonucleoside binding"/>
    <property type="evidence" value="ECO:0007669"/>
    <property type="project" value="InterPro"/>
</dbReference>
<dbReference type="GO" id="GO:0006351">
    <property type="term" value="P:DNA-templated transcription"/>
    <property type="evidence" value="ECO:0007669"/>
    <property type="project" value="UniProtKB-UniRule"/>
</dbReference>
<dbReference type="CDD" id="cd00653">
    <property type="entry name" value="RNA_pol_B_RPB2"/>
    <property type="match status" value="1"/>
</dbReference>
<dbReference type="FunFam" id="2.40.50.100:FF:000006">
    <property type="entry name" value="DNA-directed RNA polymerase subunit beta"/>
    <property type="match status" value="1"/>
</dbReference>
<dbReference type="FunFam" id="2.40.50.150:FF:000001">
    <property type="entry name" value="DNA-directed RNA polymerase subunit beta"/>
    <property type="match status" value="1"/>
</dbReference>
<dbReference type="FunFam" id="3.90.1110.10:FF:000001">
    <property type="entry name" value="DNA-directed RNA polymerase subunit beta"/>
    <property type="match status" value="1"/>
</dbReference>
<dbReference type="FunFam" id="3.90.1110.10:FF:000004">
    <property type="entry name" value="DNA-directed RNA polymerase subunit beta"/>
    <property type="match status" value="1"/>
</dbReference>
<dbReference type="FunFam" id="3.90.1800.10:FF:000001">
    <property type="entry name" value="DNA-directed RNA polymerase subunit beta"/>
    <property type="match status" value="1"/>
</dbReference>
<dbReference type="Gene3D" id="2.40.50.100">
    <property type="match status" value="1"/>
</dbReference>
<dbReference type="Gene3D" id="2.40.50.150">
    <property type="match status" value="1"/>
</dbReference>
<dbReference type="Gene3D" id="3.90.1100.10">
    <property type="match status" value="2"/>
</dbReference>
<dbReference type="Gene3D" id="2.30.150.10">
    <property type="entry name" value="DNA-directed RNA polymerase, beta subunit, external 1 domain"/>
    <property type="match status" value="1"/>
</dbReference>
<dbReference type="Gene3D" id="2.40.270.10">
    <property type="entry name" value="DNA-directed RNA polymerase, subunit 2, domain 6"/>
    <property type="match status" value="1"/>
</dbReference>
<dbReference type="Gene3D" id="3.90.1800.10">
    <property type="entry name" value="RNA polymerase alpha subunit dimerisation domain"/>
    <property type="match status" value="1"/>
</dbReference>
<dbReference type="Gene3D" id="3.90.1110.10">
    <property type="entry name" value="RNA polymerase Rpb2, domain 2"/>
    <property type="match status" value="1"/>
</dbReference>
<dbReference type="HAMAP" id="MF_01321">
    <property type="entry name" value="RNApol_bact_RpoB"/>
    <property type="match status" value="1"/>
</dbReference>
<dbReference type="InterPro" id="IPR042107">
    <property type="entry name" value="DNA-dir_RNA_pol_bsu_ext_1_sf"/>
</dbReference>
<dbReference type="InterPro" id="IPR019462">
    <property type="entry name" value="DNA-dir_RNA_pol_bsu_external_1"/>
</dbReference>
<dbReference type="InterPro" id="IPR015712">
    <property type="entry name" value="DNA-dir_RNA_pol_su2"/>
</dbReference>
<dbReference type="InterPro" id="IPR007120">
    <property type="entry name" value="DNA-dir_RNAP_su2_dom"/>
</dbReference>
<dbReference type="InterPro" id="IPR037033">
    <property type="entry name" value="DNA-dir_RNAP_su2_hyb_sf"/>
</dbReference>
<dbReference type="InterPro" id="IPR010243">
    <property type="entry name" value="RNA_pol_bsu_bac"/>
</dbReference>
<dbReference type="InterPro" id="IPR007121">
    <property type="entry name" value="RNA_pol_bsu_CS"/>
</dbReference>
<dbReference type="InterPro" id="IPR007644">
    <property type="entry name" value="RNA_pol_bsu_protrusion"/>
</dbReference>
<dbReference type="InterPro" id="IPR007642">
    <property type="entry name" value="RNA_pol_Rpb2_2"/>
</dbReference>
<dbReference type="InterPro" id="IPR037034">
    <property type="entry name" value="RNA_pol_Rpb2_2_sf"/>
</dbReference>
<dbReference type="InterPro" id="IPR007645">
    <property type="entry name" value="RNA_pol_Rpb2_3"/>
</dbReference>
<dbReference type="InterPro" id="IPR007641">
    <property type="entry name" value="RNA_pol_Rpb2_7"/>
</dbReference>
<dbReference type="InterPro" id="IPR014724">
    <property type="entry name" value="RNA_pol_RPB2_OB-fold"/>
</dbReference>
<dbReference type="NCBIfam" id="NF001616">
    <property type="entry name" value="PRK00405.1"/>
    <property type="match status" value="1"/>
</dbReference>
<dbReference type="NCBIfam" id="TIGR02013">
    <property type="entry name" value="rpoB"/>
    <property type="match status" value="1"/>
</dbReference>
<dbReference type="PANTHER" id="PTHR20856">
    <property type="entry name" value="DNA-DIRECTED RNA POLYMERASE I SUBUNIT 2"/>
    <property type="match status" value="1"/>
</dbReference>
<dbReference type="Pfam" id="PF04563">
    <property type="entry name" value="RNA_pol_Rpb2_1"/>
    <property type="match status" value="1"/>
</dbReference>
<dbReference type="Pfam" id="PF04561">
    <property type="entry name" value="RNA_pol_Rpb2_2"/>
    <property type="match status" value="2"/>
</dbReference>
<dbReference type="Pfam" id="PF04565">
    <property type="entry name" value="RNA_pol_Rpb2_3"/>
    <property type="match status" value="1"/>
</dbReference>
<dbReference type="Pfam" id="PF10385">
    <property type="entry name" value="RNA_pol_Rpb2_45"/>
    <property type="match status" value="1"/>
</dbReference>
<dbReference type="Pfam" id="PF00562">
    <property type="entry name" value="RNA_pol_Rpb2_6"/>
    <property type="match status" value="1"/>
</dbReference>
<dbReference type="Pfam" id="PF04560">
    <property type="entry name" value="RNA_pol_Rpb2_7"/>
    <property type="match status" value="1"/>
</dbReference>
<dbReference type="SUPFAM" id="SSF64484">
    <property type="entry name" value="beta and beta-prime subunits of DNA dependent RNA-polymerase"/>
    <property type="match status" value="1"/>
</dbReference>
<dbReference type="PROSITE" id="PS01166">
    <property type="entry name" value="RNA_POL_BETA"/>
    <property type="match status" value="1"/>
</dbReference>
<protein>
    <recommendedName>
        <fullName evidence="1">DNA-directed RNA polymerase subunit beta</fullName>
        <shortName evidence="1">RNAP subunit beta</shortName>
        <ecNumber evidence="1">2.7.7.6</ecNumber>
    </recommendedName>
    <alternativeName>
        <fullName evidence="1">RNA polymerase subunit beta</fullName>
    </alternativeName>
    <alternativeName>
        <fullName evidence="1">Transcriptase subunit beta</fullName>
    </alternativeName>
</protein>
<name>RPOB_PSE14</name>
<evidence type="ECO:0000255" key="1">
    <source>
        <dbReference type="HAMAP-Rule" id="MF_01321"/>
    </source>
</evidence>
<sequence length="1357" mass="151004">MAYSYTEKKRIRKDFSKLPDVMDVPYLLAIQLDSYREFLQAGATKDQFRDVGLHAAFKSVFPIISYSGNAALEYVGYRLGEPAFDVKECVLRGVTYAVPLRVKVRLIIFDKESSNKAIKDIKEQEVYMGEIPLMTENGTFVINGTERVIVSQLHRSPGVFFDHDRGKTHSSGKLLYSARIIPYRGSWLDFEFDPKDCVFVRIDRRRKLPASVLLRALGYTTEQVLDAFYTTNVFHVRGENLSLELVPQRLRGEIAVLDILDDKGKVIVEQGRRITARHINQLEKAGIKELEVPLDYVLGRTTAKVIVHPATGEIIAECNTELNTEILAKIAKAQVVRIETLYTNDIDCGPFVSDTLKIDSTSNQLEALVEIYRMMRPGEPPTKDAAETLFNNLFFSPERYDLSAVGRMKFNRRIGRTEIEGSGVLCKEDIVAVLKTLVDIRNGKGIVDDIDHLGNRRVRCVGEMAENQFRVGLVRVERAVKERLSMAESEGLMPQDLINAKPVAAAVKEFFGSSQLSQFMDQNNPLSEITLKRRVSALGPGGLTRERAGFEVRDVHPTHYGRVCPIETPEGPNIGLINSLAAYARTNQYGFLESPYRVVKEGLVTEEIVFLSAIEEADHVIAQASAAMNDKQELIDELVAVRHLNEFTVKAPADVTLMDVSPKQVVSVAASLIPFLEHDDANRALMGSNMQRQAVPTLRADKPLVGTGMERNVARDSGVCVVARRGGVIDSVDASRIVVRVADDEVETGEAGVDIYNLTKYTRSNQNTCINQRPLVSKGDRVQRSDIMADGPSTDMGELALGQNMRIAFMAWNGFNFEDSICLSERVVQEDRFTTIHIQELTCVARDTKLGPEEITADIPNVGEAALNKLDEAGIVYVGAEVGAGDILVGKVTPKGETQLTPEEKLLRAIFGEKASDVKDTSLRVPTGTKGTVIDVQVFTRDGVERDARALSIEKSQLDEIRKDLNEEFRIVEGATFERLRSALVGRVAEGGAGLKKGQEITNEVLDGLEHGQWFKLRMAEDALNEQLEKAQAYIVDRRRLLDDKFEDKKRKLQQGDDLAPGVLKIVKVYLAIRRRIQPGDKMAGRHGNKGVVSVIMPVEDMPHDANGTPVDIVLNPLGVPSRMNVGQILETHLGLAAKGLGEKINRMLEEQRKVAELRKFLNEIYNEIGGRQESLEDLTDNEILDLAKNLRNGVPMATPVFDGAKESEIKAMLKLADMPESGQMQLFDGRTGNKFERAVTVGYMYMLKLNHLVDDKMHARSTGSYSLVTQQPLGGKAQFGGQRFGEMEVWALEAYGAAYTLQEMLTVKSDDVNGRTKMYKNIVDGDHRMEPGMPESFNVLIKEIRSLGIDIDLETE</sequence>
<accession>Q48D29</accession>
<keyword id="KW-0240">DNA-directed RNA polymerase</keyword>
<keyword id="KW-0548">Nucleotidyltransferase</keyword>
<keyword id="KW-0804">Transcription</keyword>
<keyword id="KW-0808">Transferase</keyword>
<organism>
    <name type="scientific">Pseudomonas savastanoi pv. phaseolicola (strain 1448A / Race 6)</name>
    <name type="common">Pseudomonas syringae pv. phaseolicola (strain 1448A / Race 6)</name>
    <dbReference type="NCBI Taxonomy" id="264730"/>
    <lineage>
        <taxon>Bacteria</taxon>
        <taxon>Pseudomonadati</taxon>
        <taxon>Pseudomonadota</taxon>
        <taxon>Gammaproteobacteria</taxon>
        <taxon>Pseudomonadales</taxon>
        <taxon>Pseudomonadaceae</taxon>
        <taxon>Pseudomonas</taxon>
    </lineage>
</organism>
<reference key="1">
    <citation type="journal article" date="2005" name="J. Bacteriol.">
        <title>Whole-genome sequence analysis of Pseudomonas syringae pv. phaseolicola 1448A reveals divergence among pathovars in genes involved in virulence and transposition.</title>
        <authorList>
            <person name="Joardar V."/>
            <person name="Lindeberg M."/>
            <person name="Jackson R.W."/>
            <person name="Selengut J."/>
            <person name="Dodson R."/>
            <person name="Brinkac L.M."/>
            <person name="Daugherty S.C."/>
            <person name="DeBoy R.T."/>
            <person name="Durkin A.S."/>
            <person name="Gwinn Giglio M."/>
            <person name="Madupu R."/>
            <person name="Nelson W.C."/>
            <person name="Rosovitz M.J."/>
            <person name="Sullivan S.A."/>
            <person name="Crabtree J."/>
            <person name="Creasy T."/>
            <person name="Davidsen T.M."/>
            <person name="Haft D.H."/>
            <person name="Zafar N."/>
            <person name="Zhou L."/>
            <person name="Halpin R."/>
            <person name="Holley T."/>
            <person name="Khouri H.M."/>
            <person name="Feldblyum T.V."/>
            <person name="White O."/>
            <person name="Fraser C.M."/>
            <person name="Chatterjee A.K."/>
            <person name="Cartinhour S."/>
            <person name="Schneider D."/>
            <person name="Mansfield J.W."/>
            <person name="Collmer A."/>
            <person name="Buell R."/>
        </authorList>
    </citation>
    <scope>NUCLEOTIDE SEQUENCE [LARGE SCALE GENOMIC DNA]</scope>
    <source>
        <strain>1448A / Race 6</strain>
    </source>
</reference>